<feature type="chain" id="PRO_0000282921" description="Tetraspanin-33">
    <location>
        <begin position="1"/>
        <end position="283"/>
    </location>
</feature>
<feature type="topological domain" description="Cytoplasmic" evidence="4">
    <location>
        <begin position="1"/>
        <end position="24"/>
    </location>
</feature>
<feature type="transmembrane region" description="Helical" evidence="4">
    <location>
        <begin position="25"/>
        <end position="45"/>
    </location>
</feature>
<feature type="topological domain" description="Extracellular" evidence="4">
    <location>
        <begin position="46"/>
        <end position="64"/>
    </location>
</feature>
<feature type="transmembrane region" description="Helical" evidence="4">
    <location>
        <begin position="65"/>
        <end position="85"/>
    </location>
</feature>
<feature type="topological domain" description="Cytoplasmic" evidence="4">
    <location>
        <begin position="86"/>
        <end position="96"/>
    </location>
</feature>
<feature type="transmembrane region" description="Helical" evidence="4">
    <location>
        <begin position="97"/>
        <end position="117"/>
    </location>
</feature>
<feature type="topological domain" description="Extracellular" evidence="4">
    <location>
        <begin position="118"/>
        <end position="235"/>
    </location>
</feature>
<feature type="transmembrane region" description="Helical" evidence="4">
    <location>
        <begin position="236"/>
        <end position="256"/>
    </location>
</feature>
<feature type="topological domain" description="Cytoplasmic" evidence="4">
    <location>
        <begin position="257"/>
        <end position="283"/>
    </location>
</feature>
<feature type="glycosylation site" description="N-linked (GlcNAc...) asparagine" evidence="4">
    <location>
        <position position="172"/>
    </location>
</feature>
<feature type="disulfide bond" evidence="1">
    <location>
        <begin position="156"/>
        <end position="224"/>
    </location>
</feature>
<feature type="disulfide bond" evidence="1">
    <location>
        <begin position="157"/>
        <end position="189"/>
    </location>
</feature>
<feature type="disulfide bond" evidence="1">
    <location>
        <begin position="173"/>
        <end position="183"/>
    </location>
</feature>
<feature type="disulfide bond" evidence="1">
    <location>
        <begin position="190"/>
        <end position="203"/>
    </location>
</feature>
<comment type="function">
    <text evidence="2 3">Part of TspanC8 subgroup, composed of 6 members that interact with the transmembrane metalloprotease ADAM10. This interaction is required for ADAM10 exit from the endoplasmic reticulum and for enzymatic maturation and trafficking to the cell surface as well as substrate specificity. Different TspanC8/ADAM10 complexes have distinct substrates (By similarity). Plays an important role in normal erythropoiesis (By similarity). It has a role in the differentiation of erythroid progenitors (By similarity). Negatively regulates ligand-induced Notch activity probably by regulating ADAM10 activity. Mediates docking of ADAM10 to zonula adherens by interacting with ADAM10 and, in a PDZD11-dependent manner, with the zonula adherens protein PLEKHA7 (By similarity).</text>
</comment>
<comment type="subunit">
    <text evidence="3 5">Homodimer; disulfide-linked (By similarity). Interacts (via extracellular domain) with ADAM10 (via extracellular domain) (PubMed:23035126). Interacts (via cytoplasmic domain) with PLEKHA7 (via WW domains); the interaction is dependent on PDZD11 being bound to PLEKHA7 and facilitates the docking of ADAM10 to zonula adherens (By similarity).</text>
</comment>
<comment type="subcellular location">
    <subcellularLocation>
        <location evidence="2">Cell membrane</location>
        <topology evidence="6">Multi-pass membrane protein</topology>
    </subcellularLocation>
    <subcellularLocation>
        <location evidence="3">Cell junction</location>
        <location evidence="3">Adherens junction</location>
    </subcellularLocation>
    <subcellularLocation>
        <location evidence="3">Cytoplasm</location>
    </subcellularLocation>
    <text evidence="3">Is localized to zonula adherens by PLEKHA7 by a PDZD11-dependent interaction.</text>
</comment>
<comment type="similarity">
    <text evidence="6">Belongs to the tetraspanin (TM4SF) family.</text>
</comment>
<proteinExistence type="evidence at protein level"/>
<reference key="1">
    <citation type="submission" date="2005-08" db="EMBL/GenBank/DDBJ databases">
        <authorList>
            <consortium name="NIH - Mammalian Gene Collection (MGC) project"/>
        </authorList>
    </citation>
    <scope>NUCLEOTIDE SEQUENCE [LARGE SCALE MRNA]</scope>
    <source>
        <strain>Crossbred X Angus</strain>
        <tissue>Ileum</tissue>
    </source>
</reference>
<reference key="2">
    <citation type="journal article" date="2012" name="J. Biol. Chem.">
        <title>The TspanC8 subgroup of tetraspanins interacts with A disintegrin and metalloprotease 10 (ADAM10) and regulates its maturation and cell surface expression.</title>
        <authorList>
            <person name="Haining E.J."/>
            <person name="Yang J."/>
            <person name="Bailey R.L."/>
            <person name="Khan K."/>
            <person name="Collier R."/>
            <person name="Tsai S."/>
            <person name="Watson S.P."/>
            <person name="Frampton J."/>
            <person name="Garcia P."/>
            <person name="Tomlinson M.G."/>
        </authorList>
    </citation>
    <scope>INTERACTION WITH ADAM10</scope>
</reference>
<organism>
    <name type="scientific">Bos taurus</name>
    <name type="common">Bovine</name>
    <dbReference type="NCBI Taxonomy" id="9913"/>
    <lineage>
        <taxon>Eukaryota</taxon>
        <taxon>Metazoa</taxon>
        <taxon>Chordata</taxon>
        <taxon>Craniata</taxon>
        <taxon>Vertebrata</taxon>
        <taxon>Euteleostomi</taxon>
        <taxon>Mammalia</taxon>
        <taxon>Eutheria</taxon>
        <taxon>Laurasiatheria</taxon>
        <taxon>Artiodactyla</taxon>
        <taxon>Ruminantia</taxon>
        <taxon>Pecora</taxon>
        <taxon>Bovidae</taxon>
        <taxon>Bovinae</taxon>
        <taxon>Bos</taxon>
    </lineage>
</organism>
<gene>
    <name type="primary">TSPAN33</name>
</gene>
<name>TSN33_BOVIN</name>
<evidence type="ECO:0000250" key="1">
    <source>
        <dbReference type="UniProtKB" id="O95858"/>
    </source>
</evidence>
<evidence type="ECO:0000250" key="2">
    <source>
        <dbReference type="UniProtKB" id="Q86UF1"/>
    </source>
</evidence>
<evidence type="ECO:0000250" key="3">
    <source>
        <dbReference type="UniProtKB" id="Q8R3S2"/>
    </source>
</evidence>
<evidence type="ECO:0000255" key="4"/>
<evidence type="ECO:0000269" key="5">
    <source>
    </source>
</evidence>
<evidence type="ECO:0000305" key="6"/>
<keyword id="KW-0965">Cell junction</keyword>
<keyword id="KW-1003">Cell membrane</keyword>
<keyword id="KW-0963">Cytoplasm</keyword>
<keyword id="KW-1015">Disulfide bond</keyword>
<keyword id="KW-0325">Glycoprotein</keyword>
<keyword id="KW-0472">Membrane</keyword>
<keyword id="KW-1185">Reference proteome</keyword>
<keyword id="KW-0812">Transmembrane</keyword>
<keyword id="KW-1133">Transmembrane helix</keyword>
<protein>
    <recommendedName>
        <fullName>Tetraspanin-33</fullName>
        <shortName>Tspan-33</shortName>
    </recommendedName>
</protein>
<accession>Q3SYV5</accession>
<sequence>MARRPGAPAAYGEDFSFVSPLVKYLLFFFNMLFWVISMVMVAVGVYARLMKHEEAALACLAVDPAILLIVVGILMFLLTFCGCIGSLRENICLLQTFSLCLTVVFLLQLAAGVLGFVFSDKVRGKVSEIINNAIVHYRDDLDLQNLIDFGQKEFSCCGGISYKDWSLNMYFNCSEDNPSRERCSVPYSCCLPTPNQAVINTMCGQGMQALDYLEASKVIYTNGCIDRLVNWIHSNLFVLGGVALGLAIPQLVGIMLSMILVSQIKDQIKLQLYNQQHRADPWY</sequence>
<dbReference type="EMBL" id="BC103364">
    <property type="protein sequence ID" value="AAI03365.1"/>
    <property type="molecule type" value="mRNA"/>
</dbReference>
<dbReference type="RefSeq" id="NP_001029844.1">
    <property type="nucleotide sequence ID" value="NM_001034672.2"/>
</dbReference>
<dbReference type="SMR" id="Q3SYV5"/>
<dbReference type="FunCoup" id="Q3SYV5">
    <property type="interactions" value="113"/>
</dbReference>
<dbReference type="STRING" id="9913.ENSBTAP00000009542"/>
<dbReference type="GlyCosmos" id="Q3SYV5">
    <property type="glycosylation" value="1 site, No reported glycans"/>
</dbReference>
<dbReference type="GlyGen" id="Q3SYV5">
    <property type="glycosylation" value="1 site"/>
</dbReference>
<dbReference type="PaxDb" id="9913-ENSBTAP00000009542"/>
<dbReference type="GeneID" id="539284"/>
<dbReference type="KEGG" id="bta:539284"/>
<dbReference type="CTD" id="340348"/>
<dbReference type="eggNOG" id="KOG3882">
    <property type="taxonomic scope" value="Eukaryota"/>
</dbReference>
<dbReference type="InParanoid" id="Q3SYV5"/>
<dbReference type="OrthoDB" id="2014092at2759"/>
<dbReference type="Proteomes" id="UP000009136">
    <property type="component" value="Unplaced"/>
</dbReference>
<dbReference type="GO" id="GO:0005912">
    <property type="term" value="C:adherens junction"/>
    <property type="evidence" value="ECO:0007669"/>
    <property type="project" value="UniProtKB-SubCell"/>
</dbReference>
<dbReference type="GO" id="GO:0005737">
    <property type="term" value="C:cytoplasm"/>
    <property type="evidence" value="ECO:0007669"/>
    <property type="project" value="UniProtKB-SubCell"/>
</dbReference>
<dbReference type="GO" id="GO:0005886">
    <property type="term" value="C:plasma membrane"/>
    <property type="evidence" value="ECO:0000318"/>
    <property type="project" value="GO_Central"/>
</dbReference>
<dbReference type="GO" id="GO:0072659">
    <property type="term" value="P:protein localization to plasma membrane"/>
    <property type="evidence" value="ECO:0000318"/>
    <property type="project" value="GO_Central"/>
</dbReference>
<dbReference type="GO" id="GO:0051604">
    <property type="term" value="P:protein maturation"/>
    <property type="evidence" value="ECO:0000318"/>
    <property type="project" value="GO_Central"/>
</dbReference>
<dbReference type="CDD" id="cd03158">
    <property type="entry name" value="penumbra_like_LEL"/>
    <property type="match status" value="1"/>
</dbReference>
<dbReference type="FunFam" id="1.10.1450.10:FF:000007">
    <property type="entry name" value="Tetraspanin"/>
    <property type="match status" value="1"/>
</dbReference>
<dbReference type="Gene3D" id="1.10.1450.10">
    <property type="entry name" value="Tetraspanin"/>
    <property type="match status" value="1"/>
</dbReference>
<dbReference type="InterPro" id="IPR018499">
    <property type="entry name" value="Tetraspanin/Peripherin"/>
</dbReference>
<dbReference type="InterPro" id="IPR000301">
    <property type="entry name" value="Tetraspanin_animals"/>
</dbReference>
<dbReference type="InterPro" id="IPR008952">
    <property type="entry name" value="Tetraspanin_EC2_sf"/>
</dbReference>
<dbReference type="PANTHER" id="PTHR19282">
    <property type="entry name" value="TETRASPANIN"/>
    <property type="match status" value="1"/>
</dbReference>
<dbReference type="PANTHER" id="PTHR19282:SF154">
    <property type="entry name" value="TETRASPANIN-33"/>
    <property type="match status" value="1"/>
</dbReference>
<dbReference type="Pfam" id="PF00335">
    <property type="entry name" value="Tetraspanin"/>
    <property type="match status" value="1"/>
</dbReference>
<dbReference type="PIRSF" id="PIRSF002419">
    <property type="entry name" value="Tetraspanin"/>
    <property type="match status" value="1"/>
</dbReference>
<dbReference type="PRINTS" id="PR00259">
    <property type="entry name" value="TMFOUR"/>
</dbReference>
<dbReference type="SUPFAM" id="SSF48652">
    <property type="entry name" value="Tetraspanin"/>
    <property type="match status" value="1"/>
</dbReference>